<keyword id="KW-0028">Amino-acid biosynthesis</keyword>
<keyword id="KW-0963">Cytoplasm</keyword>
<keyword id="KW-0315">Glutamine amidotransferase</keyword>
<keyword id="KW-0368">Histidine biosynthesis</keyword>
<keyword id="KW-0378">Hydrolase</keyword>
<keyword id="KW-0456">Lyase</keyword>
<keyword id="KW-1185">Reference proteome</keyword>
<proteinExistence type="inferred from homology"/>
<reference key="1">
    <citation type="journal article" date="2008" name="Proc. Natl. Acad. Sci. U.S.A.">
        <title>Niche adaptation and genome expansion in the chlorophyll d-producing cyanobacterium Acaryochloris marina.</title>
        <authorList>
            <person name="Swingley W.D."/>
            <person name="Chen M."/>
            <person name="Cheung P.C."/>
            <person name="Conrad A.L."/>
            <person name="Dejesa L.C."/>
            <person name="Hao J."/>
            <person name="Honchak B.M."/>
            <person name="Karbach L.E."/>
            <person name="Kurdoglu A."/>
            <person name="Lahiri S."/>
            <person name="Mastrian S.D."/>
            <person name="Miyashita H."/>
            <person name="Page L."/>
            <person name="Ramakrishna P."/>
            <person name="Satoh S."/>
            <person name="Sattley W.M."/>
            <person name="Shimada Y."/>
            <person name="Taylor H.L."/>
            <person name="Tomo T."/>
            <person name="Tsuchiya T."/>
            <person name="Wang Z.T."/>
            <person name="Raymond J."/>
            <person name="Mimuro M."/>
            <person name="Blankenship R.E."/>
            <person name="Touchman J.W."/>
        </authorList>
    </citation>
    <scope>NUCLEOTIDE SEQUENCE [LARGE SCALE GENOMIC DNA]</scope>
    <source>
        <strain>MBIC 11017</strain>
    </source>
</reference>
<protein>
    <recommendedName>
        <fullName evidence="1">Imidazole glycerol phosphate synthase subunit HisH</fullName>
        <ecNumber evidence="1">4.3.2.10</ecNumber>
    </recommendedName>
    <alternativeName>
        <fullName evidence="1">IGP synthase glutaminase subunit</fullName>
        <ecNumber evidence="1">3.5.1.2</ecNumber>
    </alternativeName>
    <alternativeName>
        <fullName evidence="1">IGP synthase subunit HisH</fullName>
    </alternativeName>
    <alternativeName>
        <fullName evidence="1">ImGP synthase subunit HisH</fullName>
        <shortName evidence="1">IGPS subunit HisH</shortName>
    </alternativeName>
</protein>
<name>HIS5_ACAM1</name>
<accession>B0BYP8</accession>
<sequence length="214" mass="23195">MPIIAVIDYDMGNLHSACKGLQEAGTQTIVSDRPEDLVSADAVVLPGVGAFDPAMQHLRSRQLIPVIQDILASGKPFLGICLGLQILFEGSEEGTEAGLGIIPGTVKRFQSEPGITIPHMGWNQLEYQQPDLPLWRHSPAQPWVYFVHSYYVDPVDPTVKAATVTHGTQTITAAIARDNLMAVQFHPEKSSTFGLQILANFVEQVQATLATPAV</sequence>
<organism>
    <name type="scientific">Acaryochloris marina (strain MBIC 11017)</name>
    <dbReference type="NCBI Taxonomy" id="329726"/>
    <lineage>
        <taxon>Bacteria</taxon>
        <taxon>Bacillati</taxon>
        <taxon>Cyanobacteriota</taxon>
        <taxon>Cyanophyceae</taxon>
        <taxon>Acaryochloridales</taxon>
        <taxon>Acaryochloridaceae</taxon>
        <taxon>Acaryochloris</taxon>
    </lineage>
</organism>
<evidence type="ECO:0000255" key="1">
    <source>
        <dbReference type="HAMAP-Rule" id="MF_00278"/>
    </source>
</evidence>
<comment type="function">
    <text evidence="1">IGPS catalyzes the conversion of PRFAR and glutamine to IGP, AICAR and glutamate. The HisH subunit catalyzes the hydrolysis of glutamine to glutamate and ammonia as part of the synthesis of IGP and AICAR. The resulting ammonia molecule is channeled to the active site of HisF.</text>
</comment>
<comment type="catalytic activity">
    <reaction evidence="1">
        <text>5-[(5-phospho-1-deoxy-D-ribulos-1-ylimino)methylamino]-1-(5-phospho-beta-D-ribosyl)imidazole-4-carboxamide + L-glutamine = D-erythro-1-(imidazol-4-yl)glycerol 3-phosphate + 5-amino-1-(5-phospho-beta-D-ribosyl)imidazole-4-carboxamide + L-glutamate + H(+)</text>
        <dbReference type="Rhea" id="RHEA:24793"/>
        <dbReference type="ChEBI" id="CHEBI:15378"/>
        <dbReference type="ChEBI" id="CHEBI:29985"/>
        <dbReference type="ChEBI" id="CHEBI:58278"/>
        <dbReference type="ChEBI" id="CHEBI:58359"/>
        <dbReference type="ChEBI" id="CHEBI:58475"/>
        <dbReference type="ChEBI" id="CHEBI:58525"/>
        <dbReference type="EC" id="4.3.2.10"/>
    </reaction>
</comment>
<comment type="catalytic activity">
    <reaction evidence="1">
        <text>L-glutamine + H2O = L-glutamate + NH4(+)</text>
        <dbReference type="Rhea" id="RHEA:15889"/>
        <dbReference type="ChEBI" id="CHEBI:15377"/>
        <dbReference type="ChEBI" id="CHEBI:28938"/>
        <dbReference type="ChEBI" id="CHEBI:29985"/>
        <dbReference type="ChEBI" id="CHEBI:58359"/>
        <dbReference type="EC" id="3.5.1.2"/>
    </reaction>
</comment>
<comment type="pathway">
    <text evidence="1">Amino-acid biosynthesis; L-histidine biosynthesis; L-histidine from 5-phospho-alpha-D-ribose 1-diphosphate: step 5/9.</text>
</comment>
<comment type="subunit">
    <text evidence="1">Heterodimer of HisH and HisF.</text>
</comment>
<comment type="subcellular location">
    <subcellularLocation>
        <location evidence="1">Cytoplasm</location>
    </subcellularLocation>
</comment>
<gene>
    <name evidence="1" type="primary">hisH</name>
    <name type="ordered locus">AM1_2049</name>
</gene>
<feature type="chain" id="PRO_1000114771" description="Imidazole glycerol phosphate synthase subunit HisH">
    <location>
        <begin position="1"/>
        <end position="214"/>
    </location>
</feature>
<feature type="domain" description="Glutamine amidotransferase type-1" evidence="1">
    <location>
        <begin position="3"/>
        <end position="211"/>
    </location>
</feature>
<feature type="active site" description="Nucleophile" evidence="1">
    <location>
        <position position="81"/>
    </location>
</feature>
<feature type="active site" evidence="1">
    <location>
        <position position="186"/>
    </location>
</feature>
<feature type="active site" evidence="1">
    <location>
        <position position="188"/>
    </location>
</feature>
<dbReference type="EC" id="4.3.2.10" evidence="1"/>
<dbReference type="EC" id="3.5.1.2" evidence="1"/>
<dbReference type="EMBL" id="CP000828">
    <property type="protein sequence ID" value="ABW27064.1"/>
    <property type="molecule type" value="Genomic_DNA"/>
</dbReference>
<dbReference type="RefSeq" id="WP_012162555.1">
    <property type="nucleotide sequence ID" value="NC_009925.1"/>
</dbReference>
<dbReference type="SMR" id="B0BYP8"/>
<dbReference type="STRING" id="329726.AM1_2049"/>
<dbReference type="KEGG" id="amr:AM1_2049"/>
<dbReference type="eggNOG" id="COG0118">
    <property type="taxonomic scope" value="Bacteria"/>
</dbReference>
<dbReference type="HOGENOM" id="CLU_071837_2_2_3"/>
<dbReference type="OrthoDB" id="9807137at2"/>
<dbReference type="UniPathway" id="UPA00031">
    <property type="reaction ID" value="UER00010"/>
</dbReference>
<dbReference type="Proteomes" id="UP000000268">
    <property type="component" value="Chromosome"/>
</dbReference>
<dbReference type="GO" id="GO:0005737">
    <property type="term" value="C:cytoplasm"/>
    <property type="evidence" value="ECO:0007669"/>
    <property type="project" value="UniProtKB-SubCell"/>
</dbReference>
<dbReference type="GO" id="GO:0004359">
    <property type="term" value="F:glutaminase activity"/>
    <property type="evidence" value="ECO:0007669"/>
    <property type="project" value="UniProtKB-EC"/>
</dbReference>
<dbReference type="GO" id="GO:0000107">
    <property type="term" value="F:imidazoleglycerol-phosphate synthase activity"/>
    <property type="evidence" value="ECO:0007669"/>
    <property type="project" value="UniProtKB-UniRule"/>
</dbReference>
<dbReference type="GO" id="GO:0016829">
    <property type="term" value="F:lyase activity"/>
    <property type="evidence" value="ECO:0007669"/>
    <property type="project" value="UniProtKB-KW"/>
</dbReference>
<dbReference type="GO" id="GO:0000105">
    <property type="term" value="P:L-histidine biosynthetic process"/>
    <property type="evidence" value="ECO:0007669"/>
    <property type="project" value="UniProtKB-UniRule"/>
</dbReference>
<dbReference type="CDD" id="cd01748">
    <property type="entry name" value="GATase1_IGP_Synthase"/>
    <property type="match status" value="1"/>
</dbReference>
<dbReference type="FunFam" id="3.40.50.880:FF:000009">
    <property type="entry name" value="Imidazole glycerol phosphate synthase subunit HisH"/>
    <property type="match status" value="1"/>
</dbReference>
<dbReference type="Gene3D" id="3.40.50.880">
    <property type="match status" value="1"/>
</dbReference>
<dbReference type="HAMAP" id="MF_00278">
    <property type="entry name" value="HisH"/>
    <property type="match status" value="1"/>
</dbReference>
<dbReference type="InterPro" id="IPR029062">
    <property type="entry name" value="Class_I_gatase-like"/>
</dbReference>
<dbReference type="InterPro" id="IPR017926">
    <property type="entry name" value="GATASE"/>
</dbReference>
<dbReference type="InterPro" id="IPR010139">
    <property type="entry name" value="Imidazole-glycPsynth_HisH"/>
</dbReference>
<dbReference type="NCBIfam" id="TIGR01855">
    <property type="entry name" value="IMP_synth_hisH"/>
    <property type="match status" value="1"/>
</dbReference>
<dbReference type="PANTHER" id="PTHR42701">
    <property type="entry name" value="IMIDAZOLE GLYCEROL PHOSPHATE SYNTHASE SUBUNIT HISH"/>
    <property type="match status" value="1"/>
</dbReference>
<dbReference type="PANTHER" id="PTHR42701:SF1">
    <property type="entry name" value="IMIDAZOLE GLYCEROL PHOSPHATE SYNTHASE SUBUNIT HISH"/>
    <property type="match status" value="1"/>
</dbReference>
<dbReference type="Pfam" id="PF00117">
    <property type="entry name" value="GATase"/>
    <property type="match status" value="1"/>
</dbReference>
<dbReference type="PIRSF" id="PIRSF000495">
    <property type="entry name" value="Amidotransf_hisH"/>
    <property type="match status" value="1"/>
</dbReference>
<dbReference type="SUPFAM" id="SSF52317">
    <property type="entry name" value="Class I glutamine amidotransferase-like"/>
    <property type="match status" value="1"/>
</dbReference>
<dbReference type="PROSITE" id="PS51273">
    <property type="entry name" value="GATASE_TYPE_1"/>
    <property type="match status" value="1"/>
</dbReference>